<accession>Q2RU46</accession>
<gene>
    <name evidence="1" type="primary">tig</name>
    <name type="ordered locus">Rru_A1549</name>
</gene>
<organism>
    <name type="scientific">Rhodospirillum rubrum (strain ATCC 11170 / ATH 1.1.1 / DSM 467 / LMG 4362 / NCIMB 8255 / S1)</name>
    <dbReference type="NCBI Taxonomy" id="269796"/>
    <lineage>
        <taxon>Bacteria</taxon>
        <taxon>Pseudomonadati</taxon>
        <taxon>Pseudomonadota</taxon>
        <taxon>Alphaproteobacteria</taxon>
        <taxon>Rhodospirillales</taxon>
        <taxon>Rhodospirillaceae</taxon>
        <taxon>Rhodospirillum</taxon>
    </lineage>
</organism>
<protein>
    <recommendedName>
        <fullName evidence="1">Trigger factor</fullName>
        <shortName evidence="1">TF</shortName>
        <ecNumber evidence="1">5.2.1.8</ecNumber>
    </recommendedName>
    <alternativeName>
        <fullName evidence="1">PPIase</fullName>
    </alternativeName>
</protein>
<feature type="chain" id="PRO_0000256607" description="Trigger factor">
    <location>
        <begin position="1"/>
        <end position="447"/>
    </location>
</feature>
<feature type="domain" description="PPIase FKBP-type" evidence="1">
    <location>
        <begin position="164"/>
        <end position="249"/>
    </location>
</feature>
<evidence type="ECO:0000255" key="1">
    <source>
        <dbReference type="HAMAP-Rule" id="MF_00303"/>
    </source>
</evidence>
<evidence type="ECO:0000305" key="2"/>
<dbReference type="EC" id="5.2.1.8" evidence="1"/>
<dbReference type="EMBL" id="CP000230">
    <property type="protein sequence ID" value="ABC22349.1"/>
    <property type="status" value="ALT_INIT"/>
    <property type="molecule type" value="Genomic_DNA"/>
</dbReference>
<dbReference type="RefSeq" id="WP_164922580.1">
    <property type="nucleotide sequence ID" value="NC_007643.1"/>
</dbReference>
<dbReference type="RefSeq" id="YP_426636.1">
    <property type="nucleotide sequence ID" value="NC_007643.1"/>
</dbReference>
<dbReference type="SMR" id="Q2RU46"/>
<dbReference type="STRING" id="269796.Rru_A1549"/>
<dbReference type="EnsemblBacteria" id="ABC22349">
    <property type="protein sequence ID" value="ABC22349"/>
    <property type="gene ID" value="Rru_A1549"/>
</dbReference>
<dbReference type="KEGG" id="rru:Rru_A1549"/>
<dbReference type="PATRIC" id="fig|269796.9.peg.1619"/>
<dbReference type="eggNOG" id="COG0544">
    <property type="taxonomic scope" value="Bacteria"/>
</dbReference>
<dbReference type="HOGENOM" id="CLU_033058_2_2_5"/>
<dbReference type="PhylomeDB" id="Q2RU46"/>
<dbReference type="Proteomes" id="UP000001929">
    <property type="component" value="Chromosome"/>
</dbReference>
<dbReference type="GO" id="GO:0005737">
    <property type="term" value="C:cytoplasm"/>
    <property type="evidence" value="ECO:0007669"/>
    <property type="project" value="UniProtKB-SubCell"/>
</dbReference>
<dbReference type="GO" id="GO:0003755">
    <property type="term" value="F:peptidyl-prolyl cis-trans isomerase activity"/>
    <property type="evidence" value="ECO:0007669"/>
    <property type="project" value="UniProtKB-UniRule"/>
</dbReference>
<dbReference type="GO" id="GO:0044183">
    <property type="term" value="F:protein folding chaperone"/>
    <property type="evidence" value="ECO:0007669"/>
    <property type="project" value="TreeGrafter"/>
</dbReference>
<dbReference type="GO" id="GO:0043022">
    <property type="term" value="F:ribosome binding"/>
    <property type="evidence" value="ECO:0007669"/>
    <property type="project" value="TreeGrafter"/>
</dbReference>
<dbReference type="GO" id="GO:0051083">
    <property type="term" value="P:'de novo' cotranslational protein folding"/>
    <property type="evidence" value="ECO:0007669"/>
    <property type="project" value="TreeGrafter"/>
</dbReference>
<dbReference type="GO" id="GO:0051301">
    <property type="term" value="P:cell division"/>
    <property type="evidence" value="ECO:0007669"/>
    <property type="project" value="UniProtKB-KW"/>
</dbReference>
<dbReference type="GO" id="GO:0061077">
    <property type="term" value="P:chaperone-mediated protein folding"/>
    <property type="evidence" value="ECO:0007669"/>
    <property type="project" value="TreeGrafter"/>
</dbReference>
<dbReference type="GO" id="GO:0015031">
    <property type="term" value="P:protein transport"/>
    <property type="evidence" value="ECO:0007669"/>
    <property type="project" value="UniProtKB-UniRule"/>
</dbReference>
<dbReference type="GO" id="GO:0043335">
    <property type="term" value="P:protein unfolding"/>
    <property type="evidence" value="ECO:0007669"/>
    <property type="project" value="TreeGrafter"/>
</dbReference>
<dbReference type="FunFam" id="3.10.50.40:FF:000001">
    <property type="entry name" value="Trigger factor"/>
    <property type="match status" value="1"/>
</dbReference>
<dbReference type="Gene3D" id="3.10.50.40">
    <property type="match status" value="1"/>
</dbReference>
<dbReference type="Gene3D" id="3.30.70.1050">
    <property type="entry name" value="Trigger factor ribosome-binding domain"/>
    <property type="match status" value="1"/>
</dbReference>
<dbReference type="Gene3D" id="1.10.3120.10">
    <property type="entry name" value="Trigger factor, C-terminal domain"/>
    <property type="match status" value="1"/>
</dbReference>
<dbReference type="HAMAP" id="MF_00303">
    <property type="entry name" value="Trigger_factor_Tig"/>
    <property type="match status" value="1"/>
</dbReference>
<dbReference type="InterPro" id="IPR046357">
    <property type="entry name" value="PPIase_dom_sf"/>
</dbReference>
<dbReference type="InterPro" id="IPR001179">
    <property type="entry name" value="PPIase_FKBP_dom"/>
</dbReference>
<dbReference type="InterPro" id="IPR005215">
    <property type="entry name" value="Trig_fac"/>
</dbReference>
<dbReference type="InterPro" id="IPR008880">
    <property type="entry name" value="Trigger_fac_C"/>
</dbReference>
<dbReference type="InterPro" id="IPR037041">
    <property type="entry name" value="Trigger_fac_C_sf"/>
</dbReference>
<dbReference type="InterPro" id="IPR008881">
    <property type="entry name" value="Trigger_fac_ribosome-bd_bac"/>
</dbReference>
<dbReference type="InterPro" id="IPR036611">
    <property type="entry name" value="Trigger_fac_ribosome-bd_sf"/>
</dbReference>
<dbReference type="InterPro" id="IPR027304">
    <property type="entry name" value="Trigger_fact/SurA_dom_sf"/>
</dbReference>
<dbReference type="NCBIfam" id="TIGR00115">
    <property type="entry name" value="tig"/>
    <property type="match status" value="1"/>
</dbReference>
<dbReference type="PANTHER" id="PTHR30560">
    <property type="entry name" value="TRIGGER FACTOR CHAPERONE AND PEPTIDYL-PROLYL CIS/TRANS ISOMERASE"/>
    <property type="match status" value="1"/>
</dbReference>
<dbReference type="PANTHER" id="PTHR30560:SF3">
    <property type="entry name" value="TRIGGER FACTOR-LIKE PROTEIN TIG, CHLOROPLASTIC"/>
    <property type="match status" value="1"/>
</dbReference>
<dbReference type="Pfam" id="PF00254">
    <property type="entry name" value="FKBP_C"/>
    <property type="match status" value="1"/>
</dbReference>
<dbReference type="Pfam" id="PF05698">
    <property type="entry name" value="Trigger_C"/>
    <property type="match status" value="1"/>
</dbReference>
<dbReference type="Pfam" id="PF05697">
    <property type="entry name" value="Trigger_N"/>
    <property type="match status" value="1"/>
</dbReference>
<dbReference type="PIRSF" id="PIRSF003095">
    <property type="entry name" value="Trigger_factor"/>
    <property type="match status" value="1"/>
</dbReference>
<dbReference type="SUPFAM" id="SSF54534">
    <property type="entry name" value="FKBP-like"/>
    <property type="match status" value="1"/>
</dbReference>
<dbReference type="SUPFAM" id="SSF109998">
    <property type="entry name" value="Triger factor/SurA peptide-binding domain-like"/>
    <property type="match status" value="1"/>
</dbReference>
<dbReference type="SUPFAM" id="SSF102735">
    <property type="entry name" value="Trigger factor ribosome-binding domain"/>
    <property type="match status" value="1"/>
</dbReference>
<dbReference type="PROSITE" id="PS50059">
    <property type="entry name" value="FKBP_PPIASE"/>
    <property type="match status" value="1"/>
</dbReference>
<reference key="1">
    <citation type="journal article" date="2011" name="Stand. Genomic Sci.">
        <title>Complete genome sequence of Rhodospirillum rubrum type strain (S1).</title>
        <authorList>
            <person name="Munk A.C."/>
            <person name="Copeland A."/>
            <person name="Lucas S."/>
            <person name="Lapidus A."/>
            <person name="Del Rio T.G."/>
            <person name="Barry K."/>
            <person name="Detter J.C."/>
            <person name="Hammon N."/>
            <person name="Israni S."/>
            <person name="Pitluck S."/>
            <person name="Brettin T."/>
            <person name="Bruce D."/>
            <person name="Han C."/>
            <person name="Tapia R."/>
            <person name="Gilna P."/>
            <person name="Schmutz J."/>
            <person name="Larimer F."/>
            <person name="Land M."/>
            <person name="Kyrpides N.C."/>
            <person name="Mavromatis K."/>
            <person name="Richardson P."/>
            <person name="Rohde M."/>
            <person name="Goeker M."/>
            <person name="Klenk H.P."/>
            <person name="Zhang Y."/>
            <person name="Roberts G.P."/>
            <person name="Reslewic S."/>
            <person name="Schwartz D.C."/>
        </authorList>
    </citation>
    <scope>NUCLEOTIDE SEQUENCE [LARGE SCALE GENOMIC DNA]</scope>
    <source>
        <strain>ATCC 11170 / ATH 1.1.1 / DSM 467 / LMG 4362 / NCIMB 8255 / S1</strain>
    </source>
</reference>
<comment type="function">
    <text evidence="1">Involved in protein export. Acts as a chaperone by maintaining the newly synthesized protein in an open conformation. Functions as a peptidyl-prolyl cis-trans isomerase.</text>
</comment>
<comment type="catalytic activity">
    <reaction evidence="1">
        <text>[protein]-peptidylproline (omega=180) = [protein]-peptidylproline (omega=0)</text>
        <dbReference type="Rhea" id="RHEA:16237"/>
        <dbReference type="Rhea" id="RHEA-COMP:10747"/>
        <dbReference type="Rhea" id="RHEA-COMP:10748"/>
        <dbReference type="ChEBI" id="CHEBI:83833"/>
        <dbReference type="ChEBI" id="CHEBI:83834"/>
        <dbReference type="EC" id="5.2.1.8"/>
    </reaction>
</comment>
<comment type="subcellular location">
    <subcellularLocation>
        <location>Cytoplasm</location>
    </subcellularLocation>
    <text evidence="1">About half TF is bound to the ribosome near the polypeptide exit tunnel while the other half is free in the cytoplasm.</text>
</comment>
<comment type="domain">
    <text evidence="1">Consists of 3 domains; the N-terminus binds the ribosome, the middle domain has PPIase activity, while the C-terminus has intrinsic chaperone activity on its own.</text>
</comment>
<comment type="similarity">
    <text evidence="1">Belongs to the FKBP-type PPIase family. Tig subfamily.</text>
</comment>
<comment type="sequence caution" evidence="2">
    <conflict type="erroneous initiation">
        <sequence resource="EMBL-CDS" id="ABC22349"/>
    </conflict>
</comment>
<sequence length="447" mass="49182">MQVTETVNESLKREYKIVIPAADIAERSARRLEELKGQMRLPGFRPGKVPMSMLRQRFGKSVLGEVLEKAVQESIREVMTSHELKPATQPDIDLISEVEEGKDVEFTLALEVLPEIGETDFSALALEREVAEVAAEKIEEALETLRQQSKTHEPVTDGRAAAGGDLVVIDFIGKLDGEAFEGGSAEAYDLELGSNSFIPGFEDQLIGATAGEARTVTVSFPEDYPAAHLAGKETVFDVTVKEVKQAVVPELDDDLAKAFGKESAEALREAVKADLQGELDEVSKTKLKRKLLDALADGHDFPVPQTLVDAEFEGIWAQIEKAKTDGQLDEEDAAKSDEDLRADYRKIAERRVRLGLLLADVGQRAQVTVAQEDLNKALMRELRRFPGQEAAVINYYRNNQQAMDNLRAPVFEDKVCAHILALATVTDKPVSVEDLMKDPDEDATPTA</sequence>
<proteinExistence type="inferred from homology"/>
<name>TIG_RHORT</name>
<keyword id="KW-0131">Cell cycle</keyword>
<keyword id="KW-0132">Cell division</keyword>
<keyword id="KW-0143">Chaperone</keyword>
<keyword id="KW-0963">Cytoplasm</keyword>
<keyword id="KW-0413">Isomerase</keyword>
<keyword id="KW-1185">Reference proteome</keyword>
<keyword id="KW-0697">Rotamase</keyword>